<feature type="chain" id="PRO_1000075984" description="UDP-N-acetylglucosamine 1-carboxyvinyltransferase">
    <location>
        <begin position="1"/>
        <end position="420"/>
    </location>
</feature>
<feature type="active site" description="Proton donor" evidence="1">
    <location>
        <position position="117"/>
    </location>
</feature>
<feature type="binding site" evidence="1">
    <location>
        <begin position="22"/>
        <end position="23"/>
    </location>
    <ligand>
        <name>phosphoenolpyruvate</name>
        <dbReference type="ChEBI" id="CHEBI:58702"/>
    </ligand>
</feature>
<feature type="binding site" evidence="1">
    <location>
        <position position="93"/>
    </location>
    <ligand>
        <name>UDP-N-acetyl-alpha-D-glucosamine</name>
        <dbReference type="ChEBI" id="CHEBI:57705"/>
    </ligand>
</feature>
<feature type="binding site" evidence="1">
    <location>
        <position position="307"/>
    </location>
    <ligand>
        <name>UDP-N-acetyl-alpha-D-glucosamine</name>
        <dbReference type="ChEBI" id="CHEBI:57705"/>
    </ligand>
</feature>
<feature type="binding site" evidence="1">
    <location>
        <position position="329"/>
    </location>
    <ligand>
        <name>UDP-N-acetyl-alpha-D-glucosamine</name>
        <dbReference type="ChEBI" id="CHEBI:57705"/>
    </ligand>
</feature>
<feature type="modified residue" description="2-(S-cysteinyl)pyruvic acid O-phosphothioketal" evidence="1">
    <location>
        <position position="117"/>
    </location>
</feature>
<name>MURA_SHEPA</name>
<sequence>MDKLKIEASGALAGNVVISGAKNAALPILMAGVLAETDFNVSNVPNLRDVNTSCELLRCLGAEVTRSGTDKVCISTTNLNEFCAPYDLVKTMRASILILGPLLARYGTADVSLPGGCAIGARPVNLHLQGLEQMGAQIEVQEGYIKARVDGRLKGAHIFMDMISVGATENLLMAASLADGETIIENAAREPEVVDLANCLIAMGAKIEGAGTDTVRIQGVESLQGCDYRVMPDRIETGSFLVAAAVTRGKIRCTKADPKSLEAVLAKLEDAGANITTGDDWIELDMQGKRPKAVNIKTVAYPGFPTDMQAQFCVLNALAEGTATITETIFENRFMHVPELSRMGATMELEGNTCIIHGIERLNGAQVMATDLRASASLVIAGLVAEGTTIVDRIYHLDRGYEHIEDKFKGLGGHVERVKS</sequence>
<reference key="1">
    <citation type="submission" date="2007-10" db="EMBL/GenBank/DDBJ databases">
        <title>Complete sequence of Shewanella pealeana ATCC 700345.</title>
        <authorList>
            <consortium name="US DOE Joint Genome Institute"/>
            <person name="Copeland A."/>
            <person name="Lucas S."/>
            <person name="Lapidus A."/>
            <person name="Barry K."/>
            <person name="Glavina del Rio T."/>
            <person name="Dalin E."/>
            <person name="Tice H."/>
            <person name="Pitluck S."/>
            <person name="Chertkov O."/>
            <person name="Brettin T."/>
            <person name="Bruce D."/>
            <person name="Detter J.C."/>
            <person name="Han C."/>
            <person name="Schmutz J."/>
            <person name="Larimer F."/>
            <person name="Land M."/>
            <person name="Hauser L."/>
            <person name="Kyrpides N."/>
            <person name="Kim E."/>
            <person name="Zhao J.-S.Z."/>
            <person name="Manno D."/>
            <person name="Hawari J."/>
            <person name="Richardson P."/>
        </authorList>
    </citation>
    <scope>NUCLEOTIDE SEQUENCE [LARGE SCALE GENOMIC DNA]</scope>
    <source>
        <strain>ATCC 700345 / ANG-SQ1</strain>
    </source>
</reference>
<keyword id="KW-0131">Cell cycle</keyword>
<keyword id="KW-0132">Cell division</keyword>
<keyword id="KW-0133">Cell shape</keyword>
<keyword id="KW-0961">Cell wall biogenesis/degradation</keyword>
<keyword id="KW-0963">Cytoplasm</keyword>
<keyword id="KW-0573">Peptidoglycan synthesis</keyword>
<keyword id="KW-0670">Pyruvate</keyword>
<keyword id="KW-1185">Reference proteome</keyword>
<keyword id="KW-0808">Transferase</keyword>
<proteinExistence type="inferred from homology"/>
<comment type="function">
    <text evidence="1">Cell wall formation. Adds enolpyruvyl to UDP-N-acetylglucosamine.</text>
</comment>
<comment type="catalytic activity">
    <reaction evidence="1">
        <text>phosphoenolpyruvate + UDP-N-acetyl-alpha-D-glucosamine = UDP-N-acetyl-3-O-(1-carboxyvinyl)-alpha-D-glucosamine + phosphate</text>
        <dbReference type="Rhea" id="RHEA:18681"/>
        <dbReference type="ChEBI" id="CHEBI:43474"/>
        <dbReference type="ChEBI" id="CHEBI:57705"/>
        <dbReference type="ChEBI" id="CHEBI:58702"/>
        <dbReference type="ChEBI" id="CHEBI:68483"/>
        <dbReference type="EC" id="2.5.1.7"/>
    </reaction>
</comment>
<comment type="pathway">
    <text evidence="1">Cell wall biogenesis; peptidoglycan biosynthesis.</text>
</comment>
<comment type="subcellular location">
    <subcellularLocation>
        <location evidence="1">Cytoplasm</location>
    </subcellularLocation>
</comment>
<comment type="similarity">
    <text evidence="1">Belongs to the EPSP synthase family. MurA subfamily.</text>
</comment>
<dbReference type="EC" id="2.5.1.7" evidence="1"/>
<dbReference type="EMBL" id="CP000851">
    <property type="protein sequence ID" value="ABV88916.1"/>
    <property type="molecule type" value="Genomic_DNA"/>
</dbReference>
<dbReference type="RefSeq" id="WP_012156800.1">
    <property type="nucleotide sequence ID" value="NC_009901.1"/>
</dbReference>
<dbReference type="SMR" id="A8H8M9"/>
<dbReference type="STRING" id="398579.Spea_3603"/>
<dbReference type="KEGG" id="spl:Spea_3603"/>
<dbReference type="eggNOG" id="COG0766">
    <property type="taxonomic scope" value="Bacteria"/>
</dbReference>
<dbReference type="HOGENOM" id="CLU_027387_0_0_6"/>
<dbReference type="OrthoDB" id="9803760at2"/>
<dbReference type="UniPathway" id="UPA00219"/>
<dbReference type="Proteomes" id="UP000002608">
    <property type="component" value="Chromosome"/>
</dbReference>
<dbReference type="GO" id="GO:0005737">
    <property type="term" value="C:cytoplasm"/>
    <property type="evidence" value="ECO:0007669"/>
    <property type="project" value="UniProtKB-SubCell"/>
</dbReference>
<dbReference type="GO" id="GO:0008760">
    <property type="term" value="F:UDP-N-acetylglucosamine 1-carboxyvinyltransferase activity"/>
    <property type="evidence" value="ECO:0007669"/>
    <property type="project" value="UniProtKB-UniRule"/>
</dbReference>
<dbReference type="GO" id="GO:0051301">
    <property type="term" value="P:cell division"/>
    <property type="evidence" value="ECO:0007669"/>
    <property type="project" value="UniProtKB-KW"/>
</dbReference>
<dbReference type="GO" id="GO:0071555">
    <property type="term" value="P:cell wall organization"/>
    <property type="evidence" value="ECO:0007669"/>
    <property type="project" value="UniProtKB-KW"/>
</dbReference>
<dbReference type="GO" id="GO:0009252">
    <property type="term" value="P:peptidoglycan biosynthetic process"/>
    <property type="evidence" value="ECO:0007669"/>
    <property type="project" value="UniProtKB-UniRule"/>
</dbReference>
<dbReference type="GO" id="GO:0008360">
    <property type="term" value="P:regulation of cell shape"/>
    <property type="evidence" value="ECO:0007669"/>
    <property type="project" value="UniProtKB-KW"/>
</dbReference>
<dbReference type="GO" id="GO:0019277">
    <property type="term" value="P:UDP-N-acetylgalactosamine biosynthetic process"/>
    <property type="evidence" value="ECO:0007669"/>
    <property type="project" value="InterPro"/>
</dbReference>
<dbReference type="CDD" id="cd01555">
    <property type="entry name" value="UdpNAET"/>
    <property type="match status" value="1"/>
</dbReference>
<dbReference type="FunFam" id="3.65.10.10:FF:000002">
    <property type="entry name" value="UDP-N-acetylglucosamine 1-carboxyvinyltransferase"/>
    <property type="match status" value="1"/>
</dbReference>
<dbReference type="Gene3D" id="3.65.10.10">
    <property type="entry name" value="Enolpyruvate transferase domain"/>
    <property type="match status" value="2"/>
</dbReference>
<dbReference type="HAMAP" id="MF_00111">
    <property type="entry name" value="MurA"/>
    <property type="match status" value="1"/>
</dbReference>
<dbReference type="InterPro" id="IPR001986">
    <property type="entry name" value="Enolpyruvate_Tfrase_dom"/>
</dbReference>
<dbReference type="InterPro" id="IPR036968">
    <property type="entry name" value="Enolpyruvate_Tfrase_sf"/>
</dbReference>
<dbReference type="InterPro" id="IPR050068">
    <property type="entry name" value="MurA_subfamily"/>
</dbReference>
<dbReference type="InterPro" id="IPR013792">
    <property type="entry name" value="RNA3'P_cycl/enolpyr_Trfase_a/b"/>
</dbReference>
<dbReference type="InterPro" id="IPR005750">
    <property type="entry name" value="UDP_GlcNAc_COvinyl_MurA"/>
</dbReference>
<dbReference type="NCBIfam" id="TIGR01072">
    <property type="entry name" value="murA"/>
    <property type="match status" value="1"/>
</dbReference>
<dbReference type="NCBIfam" id="NF006873">
    <property type="entry name" value="PRK09369.1"/>
    <property type="match status" value="1"/>
</dbReference>
<dbReference type="PANTHER" id="PTHR43783">
    <property type="entry name" value="UDP-N-ACETYLGLUCOSAMINE 1-CARBOXYVINYLTRANSFERASE"/>
    <property type="match status" value="1"/>
</dbReference>
<dbReference type="PANTHER" id="PTHR43783:SF1">
    <property type="entry name" value="UDP-N-ACETYLGLUCOSAMINE 1-CARBOXYVINYLTRANSFERASE"/>
    <property type="match status" value="1"/>
</dbReference>
<dbReference type="Pfam" id="PF00275">
    <property type="entry name" value="EPSP_synthase"/>
    <property type="match status" value="1"/>
</dbReference>
<dbReference type="SUPFAM" id="SSF55205">
    <property type="entry name" value="EPT/RTPC-like"/>
    <property type="match status" value="1"/>
</dbReference>
<accession>A8H8M9</accession>
<evidence type="ECO:0000255" key="1">
    <source>
        <dbReference type="HAMAP-Rule" id="MF_00111"/>
    </source>
</evidence>
<gene>
    <name evidence="1" type="primary">murA</name>
    <name type="ordered locus">Spea_3603</name>
</gene>
<organism>
    <name type="scientific">Shewanella pealeana (strain ATCC 700345 / ANG-SQ1)</name>
    <dbReference type="NCBI Taxonomy" id="398579"/>
    <lineage>
        <taxon>Bacteria</taxon>
        <taxon>Pseudomonadati</taxon>
        <taxon>Pseudomonadota</taxon>
        <taxon>Gammaproteobacteria</taxon>
        <taxon>Alteromonadales</taxon>
        <taxon>Shewanellaceae</taxon>
        <taxon>Shewanella</taxon>
    </lineage>
</organism>
<protein>
    <recommendedName>
        <fullName evidence="1">UDP-N-acetylglucosamine 1-carboxyvinyltransferase</fullName>
        <ecNumber evidence="1">2.5.1.7</ecNumber>
    </recommendedName>
    <alternativeName>
        <fullName evidence="1">Enoylpyruvate transferase</fullName>
    </alternativeName>
    <alternativeName>
        <fullName evidence="1">UDP-N-acetylglucosamine enolpyruvyl transferase</fullName>
        <shortName evidence="1">EPT</shortName>
    </alternativeName>
</protein>